<dbReference type="EC" id="2.5.1.58"/>
<dbReference type="EC" id="2.5.1.59"/>
<dbReference type="EMBL" id="AF110691">
    <property type="protein sequence ID" value="AAD32540.1"/>
    <property type="molecule type" value="Genomic_DNA"/>
</dbReference>
<dbReference type="PDB" id="3DRA">
    <property type="method" value="X-ray"/>
    <property type="resolution" value="1.80 A"/>
    <property type="chains" value="A=1-306"/>
</dbReference>
<dbReference type="PDB" id="4YDO">
    <property type="method" value="X-ray"/>
    <property type="resolution" value="3.00 A"/>
    <property type="chains" value="A=1-305"/>
</dbReference>
<dbReference type="PDBsum" id="3DRA"/>
<dbReference type="PDBsum" id="4YDO"/>
<dbReference type="SMR" id="Q9Y765"/>
<dbReference type="EnsemblFungi" id="C1_09530W_A-T">
    <property type="protein sequence ID" value="C1_09530W_A-T-p1"/>
    <property type="gene ID" value="C1_09530W_A"/>
</dbReference>
<dbReference type="CGD" id="CAL0000180742">
    <property type="gene designation" value="RAM2"/>
</dbReference>
<dbReference type="VEuPathDB" id="FungiDB:C1_09530W_A"/>
<dbReference type="VEuPathDB" id="FungiDB:CAWG_00476"/>
<dbReference type="PhylomeDB" id="Q9Y765"/>
<dbReference type="BRENDA" id="2.5.1.58">
    <property type="organism ID" value="1096"/>
</dbReference>
<dbReference type="BRENDA" id="2.5.1.59">
    <property type="organism ID" value="1096"/>
</dbReference>
<dbReference type="EvolutionaryTrace" id="Q9Y765"/>
<dbReference type="PHI-base" id="PHI:9279"/>
<dbReference type="GO" id="GO:0005953">
    <property type="term" value="C:CAAX-protein geranylgeranyltransferase complex"/>
    <property type="evidence" value="ECO:0000250"/>
    <property type="project" value="UniProtKB"/>
</dbReference>
<dbReference type="GO" id="GO:0005965">
    <property type="term" value="C:protein farnesyltransferase complex"/>
    <property type="evidence" value="ECO:0000250"/>
    <property type="project" value="UniProtKB"/>
</dbReference>
<dbReference type="GO" id="GO:0004662">
    <property type="term" value="F:CAAX-protein geranylgeranyltransferase activity"/>
    <property type="evidence" value="ECO:0000314"/>
    <property type="project" value="CGD"/>
</dbReference>
<dbReference type="GO" id="GO:0004660">
    <property type="term" value="F:protein farnesyltransferase activity"/>
    <property type="evidence" value="ECO:0000250"/>
    <property type="project" value="UniProtKB"/>
</dbReference>
<dbReference type="GO" id="GO:0004661">
    <property type="term" value="F:protein geranylgeranyltransferase activity"/>
    <property type="evidence" value="ECO:0000250"/>
    <property type="project" value="UniProtKB"/>
</dbReference>
<dbReference type="GO" id="GO:0007323">
    <property type="term" value="P:peptide pheromone maturation"/>
    <property type="evidence" value="ECO:0007669"/>
    <property type="project" value="EnsemblFungi"/>
</dbReference>
<dbReference type="GO" id="GO:0018343">
    <property type="term" value="P:protein farnesylation"/>
    <property type="evidence" value="ECO:0000250"/>
    <property type="project" value="UniProtKB"/>
</dbReference>
<dbReference type="GO" id="GO:0018344">
    <property type="term" value="P:protein geranylgeranylation"/>
    <property type="evidence" value="ECO:0000250"/>
    <property type="project" value="UniProtKB"/>
</dbReference>
<dbReference type="FunFam" id="1.25.40.120:FF:000009">
    <property type="entry name" value="CAAX geranylgeranyltransferase alpha subunit"/>
    <property type="match status" value="1"/>
</dbReference>
<dbReference type="Gene3D" id="1.25.40.120">
    <property type="entry name" value="Protein prenylyltransferase"/>
    <property type="match status" value="1"/>
</dbReference>
<dbReference type="InterPro" id="IPR002088">
    <property type="entry name" value="Prenyl_trans_a"/>
</dbReference>
<dbReference type="PANTHER" id="PTHR11129">
    <property type="entry name" value="PROTEIN FARNESYLTRANSFERASE ALPHA SUBUNIT/RAB GERANYLGERANYL TRANSFERASE ALPHA SUBUNIT"/>
    <property type="match status" value="1"/>
</dbReference>
<dbReference type="PANTHER" id="PTHR11129:SF1">
    <property type="entry name" value="PROTEIN FARNESYLTRANSFERASE_GERANYLGERANYLTRANSFERASE TYPE-1 SUBUNIT ALPHA"/>
    <property type="match status" value="1"/>
</dbReference>
<dbReference type="Pfam" id="PF01239">
    <property type="entry name" value="PPTA"/>
    <property type="match status" value="4"/>
</dbReference>
<dbReference type="SUPFAM" id="SSF48439">
    <property type="entry name" value="Protein prenylyltransferase"/>
    <property type="match status" value="1"/>
</dbReference>
<dbReference type="PROSITE" id="PS51147">
    <property type="entry name" value="PFTA"/>
    <property type="match status" value="5"/>
</dbReference>
<sequence>MTDSKYDYSDITPVDINTEEPQICQILYDEDYKQIMGLLLALMKAEEYSERALHITELGINELASHYTIWIYRFNILKNLPNRNLYDELDWCEEIALDNEKNYQIWNYRQLIIGQIMELNNNDFDPYREFPILEAMLSSDPKNHHVWSYRKWLVDTFDLHNDAKELSFVDKVIDTDLKNNSAWSHRFFLLFSKKHLATDNTIDEELNYVKDKIVKCPQNPSTWNYLLGIHERFDRSITQLEEFSLQFVDLEKDQVTSSFALETLAKIYTQQKKYNESRTVYDLLKSKYDPIRSNFWDYQISKLTSV</sequence>
<comment type="function">
    <text>Essential subunit of both the farnesyltransferase and the geranylgeranyltransferase complex. Contributes to the transfer of a farnesyl or geranylgeranyl moiety from farnesyl or geranylgeranyl diphosphate to a cysteine at the fourth position from the C-terminus of several proteins having the C-terminal sequence Cys-aliphatic-aliphatic-X.</text>
</comment>
<comment type="catalytic activity">
    <reaction>
        <text>L-cysteinyl-[protein] + (2E,6E)-farnesyl diphosphate = S-(2E,6E)-farnesyl-L-cysteinyl-[protein] + diphosphate</text>
        <dbReference type="Rhea" id="RHEA:13345"/>
        <dbReference type="Rhea" id="RHEA-COMP:10131"/>
        <dbReference type="Rhea" id="RHEA-COMP:11535"/>
        <dbReference type="ChEBI" id="CHEBI:29950"/>
        <dbReference type="ChEBI" id="CHEBI:33019"/>
        <dbReference type="ChEBI" id="CHEBI:86019"/>
        <dbReference type="ChEBI" id="CHEBI:175763"/>
        <dbReference type="EC" id="2.5.1.58"/>
    </reaction>
</comment>
<comment type="catalytic activity">
    <reaction>
        <text>geranylgeranyl diphosphate + L-cysteinyl-[protein] = S-geranylgeranyl-L-cysteinyl-[protein] + diphosphate</text>
        <dbReference type="Rhea" id="RHEA:21240"/>
        <dbReference type="Rhea" id="RHEA-COMP:10131"/>
        <dbReference type="Rhea" id="RHEA-COMP:11537"/>
        <dbReference type="ChEBI" id="CHEBI:29950"/>
        <dbReference type="ChEBI" id="CHEBI:33019"/>
        <dbReference type="ChEBI" id="CHEBI:57533"/>
        <dbReference type="ChEBI" id="CHEBI:86021"/>
        <dbReference type="EC" id="2.5.1.59"/>
    </reaction>
</comment>
<comment type="cofactor">
    <cofactor evidence="1">
        <name>Mg(2+)</name>
        <dbReference type="ChEBI" id="CHEBI:18420"/>
    </cofactor>
</comment>
<comment type="subunit">
    <text evidence="2">Heterodimer of an alpha and a beta subunit.</text>
</comment>
<comment type="similarity">
    <text evidence="3">Belongs to the protein prenyltransferase subunit alpha family.</text>
</comment>
<organism>
    <name type="scientific">Candida albicans</name>
    <name type="common">Yeast</name>
    <dbReference type="NCBI Taxonomy" id="5476"/>
    <lineage>
        <taxon>Eukaryota</taxon>
        <taxon>Fungi</taxon>
        <taxon>Dikarya</taxon>
        <taxon>Ascomycota</taxon>
        <taxon>Saccharomycotina</taxon>
        <taxon>Pichiomycetes</taxon>
        <taxon>Debaryomycetaceae</taxon>
        <taxon>Candida/Lodderomyces clade</taxon>
        <taxon>Candida</taxon>
    </lineage>
</organism>
<protein>
    <recommendedName>
        <fullName>Protein farnesyltransferase/geranylgeranyltransferase type-1 subunit alpha</fullName>
        <ecNumber>2.5.1.58</ecNumber>
        <ecNumber>2.5.1.59</ecNumber>
    </recommendedName>
    <alternativeName>
        <fullName>CAAX farnesyltransferase subunit alpha</fullName>
    </alternativeName>
    <alternativeName>
        <fullName>FTase-alpha</fullName>
    </alternativeName>
    <alternativeName>
        <fullName>Ras proteins prenyltransferase subunit alpha</fullName>
    </alternativeName>
    <alternativeName>
        <fullName>Type I protein geranyl-geranyltransferase subunit alpha</fullName>
        <shortName>GGTase-I-alpha</shortName>
    </alternativeName>
</protein>
<accession>Q9Y765</accession>
<feature type="chain" id="PRO_0000119752" description="Protein farnesyltransferase/geranylgeranyltransferase type-1 subunit alpha">
    <location>
        <begin position="1"/>
        <end position="306"/>
    </location>
</feature>
<feature type="repeat" description="PFTA 1">
    <location>
        <begin position="48"/>
        <end position="82"/>
    </location>
</feature>
<feature type="repeat" description="PFTA 2">
    <location>
        <begin position="84"/>
        <end position="118"/>
    </location>
</feature>
<feature type="repeat" description="PFTA 3">
    <location>
        <begin position="125"/>
        <end position="159"/>
    </location>
</feature>
<feature type="repeat" description="PFTA 4">
    <location>
        <begin position="161"/>
        <end position="195"/>
    </location>
</feature>
<feature type="repeat" description="PFTA 5">
    <location>
        <begin position="201"/>
        <end position="235"/>
    </location>
</feature>
<feature type="strand" evidence="5">
    <location>
        <begin position="4"/>
        <end position="6"/>
    </location>
</feature>
<feature type="helix" evidence="4">
    <location>
        <begin position="30"/>
        <end position="44"/>
    </location>
</feature>
<feature type="helix" evidence="4">
    <location>
        <begin position="50"/>
        <end position="62"/>
    </location>
</feature>
<feature type="helix" evidence="4">
    <location>
        <begin position="67"/>
        <end position="78"/>
    </location>
</feature>
<feature type="helix" evidence="4">
    <location>
        <begin position="85"/>
        <end position="98"/>
    </location>
</feature>
<feature type="helix" evidence="4">
    <location>
        <begin position="105"/>
        <end position="119"/>
    </location>
</feature>
<feature type="turn" evidence="4">
    <location>
        <begin position="120"/>
        <end position="122"/>
    </location>
</feature>
<feature type="helix" evidence="4">
    <location>
        <begin position="127"/>
        <end position="139"/>
    </location>
</feature>
<feature type="helix" evidence="4">
    <location>
        <begin position="144"/>
        <end position="156"/>
    </location>
</feature>
<feature type="helix" evidence="4">
    <location>
        <begin position="163"/>
        <end position="175"/>
    </location>
</feature>
<feature type="helix" evidence="4">
    <location>
        <begin position="180"/>
        <end position="191"/>
    </location>
</feature>
<feature type="helix" evidence="4">
    <location>
        <begin position="194"/>
        <end position="196"/>
    </location>
</feature>
<feature type="helix" evidence="4">
    <location>
        <begin position="199"/>
        <end position="215"/>
    </location>
</feature>
<feature type="helix" evidence="4">
    <location>
        <begin position="220"/>
        <end position="232"/>
    </location>
</feature>
<feature type="helix" evidence="4">
    <location>
        <begin position="237"/>
        <end position="240"/>
    </location>
</feature>
<feature type="helix" evidence="4">
    <location>
        <begin position="241"/>
        <end position="245"/>
    </location>
</feature>
<feature type="strand" evidence="5">
    <location>
        <begin position="247"/>
        <end position="249"/>
    </location>
</feature>
<feature type="helix" evidence="4">
    <location>
        <begin position="250"/>
        <end position="252"/>
    </location>
</feature>
<feature type="strand" evidence="4">
    <location>
        <begin position="254"/>
        <end position="256"/>
    </location>
</feature>
<feature type="helix" evidence="4">
    <location>
        <begin position="258"/>
        <end position="270"/>
    </location>
</feature>
<feature type="helix" evidence="4">
    <location>
        <begin position="274"/>
        <end position="286"/>
    </location>
</feature>
<feature type="helix" evidence="4">
    <location>
        <begin position="290"/>
        <end position="292"/>
    </location>
</feature>
<feature type="helix" evidence="4">
    <location>
        <begin position="293"/>
        <end position="301"/>
    </location>
</feature>
<evidence type="ECO:0000250" key="1">
    <source>
        <dbReference type="UniProtKB" id="P29703"/>
    </source>
</evidence>
<evidence type="ECO:0000269" key="2">
    <source>
    </source>
</evidence>
<evidence type="ECO:0000305" key="3"/>
<evidence type="ECO:0007829" key="4">
    <source>
        <dbReference type="PDB" id="3DRA"/>
    </source>
</evidence>
<evidence type="ECO:0007829" key="5">
    <source>
        <dbReference type="PDB" id="4YDO"/>
    </source>
</evidence>
<name>FNTA_CANAX</name>
<reference key="1">
    <citation type="journal article" date="1999" name="Microbiology">
        <title>Purification of geranylgeranyltransferase I from Candida albicans and cloning of the CaRAM2 and CaCDC43 genes encoding its subunits.</title>
        <authorList>
            <person name="Mazur P."/>
            <person name="Register E."/>
            <person name="Bonfiglio C.A."/>
            <person name="Yuan X."/>
            <person name="Kurtz M.B."/>
            <person name="Williamson J.M."/>
            <person name="Kelly R."/>
        </authorList>
    </citation>
    <scope>NUCLEOTIDE SEQUENCE [GENOMIC DNA]</scope>
</reference>
<reference key="2">
    <citation type="journal article" date="2008" name="J. Biol. Chem.">
        <title>Structure of protein geranylgeranyltransferase-I from the human pathogen Candida albicans complexed with a lipid substrate.</title>
        <authorList>
            <person name="Hast M.A."/>
            <person name="Beese L.S."/>
        </authorList>
    </citation>
    <scope>X-RAY CRYSTALLOGRAPHY (1.80 ANGSTROMS) IN COMPLEX WITH BETA SUBUNIT</scope>
    <scope>SUBUNIT</scope>
</reference>
<keyword id="KW-0002">3D-structure</keyword>
<keyword id="KW-0460">Magnesium</keyword>
<keyword id="KW-0637">Prenyltransferase</keyword>
<keyword id="KW-0677">Repeat</keyword>
<keyword id="KW-0808">Transferase</keyword>
<proteinExistence type="evidence at protein level"/>
<gene>
    <name type="primary">RAM2</name>
</gene>